<accession>Q1GZF7</accession>
<evidence type="ECO:0000255" key="1">
    <source>
        <dbReference type="HAMAP-Rule" id="MF_00528"/>
    </source>
</evidence>
<gene>
    <name type="ordered locus">Mfla_2113</name>
</gene>
<organism>
    <name type="scientific">Methylobacillus flagellatus (strain ATCC 51484 / DSM 6875 / VKM B-1610 / KT)</name>
    <dbReference type="NCBI Taxonomy" id="265072"/>
    <lineage>
        <taxon>Bacteria</taxon>
        <taxon>Pseudomonadati</taxon>
        <taxon>Pseudomonadota</taxon>
        <taxon>Betaproteobacteria</taxon>
        <taxon>Nitrosomonadales</taxon>
        <taxon>Methylophilaceae</taxon>
        <taxon>Methylobacillus</taxon>
    </lineage>
</organism>
<sequence length="199" mass="21199">MDINMTRIYLASRSPRRAELLHQIGVAFVIIPSDIDESVYNAELAEDYVLRLARGKAQSCCARLPALDMPVLAADTTVCVDGKILGKPESDTEACAMLASMSGRWHEVHTAIAVASRDGTEVALSTTRVKMAALSRDVIAAYVSTGEPRDKAGAYGIQGLGGTLIERIEGSYSGVMGLPLFETAKLLRNCGVAIPGTQD</sequence>
<comment type="function">
    <text evidence="1">Nucleoside triphosphate pyrophosphatase that hydrolyzes dTTP and UTP. May have a dual role in cell division arrest and in preventing the incorporation of modified nucleotides into cellular nucleic acids.</text>
</comment>
<comment type="catalytic activity">
    <reaction evidence="1">
        <text>dTTP + H2O = dTMP + diphosphate + H(+)</text>
        <dbReference type="Rhea" id="RHEA:28534"/>
        <dbReference type="ChEBI" id="CHEBI:15377"/>
        <dbReference type="ChEBI" id="CHEBI:15378"/>
        <dbReference type="ChEBI" id="CHEBI:33019"/>
        <dbReference type="ChEBI" id="CHEBI:37568"/>
        <dbReference type="ChEBI" id="CHEBI:63528"/>
        <dbReference type="EC" id="3.6.1.9"/>
    </reaction>
</comment>
<comment type="catalytic activity">
    <reaction evidence="1">
        <text>UTP + H2O = UMP + diphosphate + H(+)</text>
        <dbReference type="Rhea" id="RHEA:29395"/>
        <dbReference type="ChEBI" id="CHEBI:15377"/>
        <dbReference type="ChEBI" id="CHEBI:15378"/>
        <dbReference type="ChEBI" id="CHEBI:33019"/>
        <dbReference type="ChEBI" id="CHEBI:46398"/>
        <dbReference type="ChEBI" id="CHEBI:57865"/>
        <dbReference type="EC" id="3.6.1.9"/>
    </reaction>
</comment>
<comment type="cofactor">
    <cofactor evidence="1">
        <name>a divalent metal cation</name>
        <dbReference type="ChEBI" id="CHEBI:60240"/>
    </cofactor>
</comment>
<comment type="subcellular location">
    <subcellularLocation>
        <location evidence="1">Cytoplasm</location>
    </subcellularLocation>
</comment>
<comment type="similarity">
    <text evidence="1">Belongs to the Maf family. YhdE subfamily.</text>
</comment>
<dbReference type="EC" id="3.6.1.9" evidence="1"/>
<dbReference type="EMBL" id="CP000284">
    <property type="protein sequence ID" value="ABE50380.1"/>
    <property type="molecule type" value="Genomic_DNA"/>
</dbReference>
<dbReference type="RefSeq" id="WP_011480334.1">
    <property type="nucleotide sequence ID" value="NC_007947.1"/>
</dbReference>
<dbReference type="SMR" id="Q1GZF7"/>
<dbReference type="STRING" id="265072.Mfla_2113"/>
<dbReference type="KEGG" id="mfa:Mfla_2113"/>
<dbReference type="eggNOG" id="COG0424">
    <property type="taxonomic scope" value="Bacteria"/>
</dbReference>
<dbReference type="HOGENOM" id="CLU_040416_2_1_4"/>
<dbReference type="OrthoDB" id="9807767at2"/>
<dbReference type="Proteomes" id="UP000002440">
    <property type="component" value="Chromosome"/>
</dbReference>
<dbReference type="GO" id="GO:0005737">
    <property type="term" value="C:cytoplasm"/>
    <property type="evidence" value="ECO:0007669"/>
    <property type="project" value="UniProtKB-SubCell"/>
</dbReference>
<dbReference type="GO" id="GO:0036218">
    <property type="term" value="F:dTTP diphosphatase activity"/>
    <property type="evidence" value="ECO:0007669"/>
    <property type="project" value="RHEA"/>
</dbReference>
<dbReference type="GO" id="GO:0036221">
    <property type="term" value="F:UTP diphosphatase activity"/>
    <property type="evidence" value="ECO:0007669"/>
    <property type="project" value="RHEA"/>
</dbReference>
<dbReference type="GO" id="GO:0009117">
    <property type="term" value="P:nucleotide metabolic process"/>
    <property type="evidence" value="ECO:0007669"/>
    <property type="project" value="UniProtKB-KW"/>
</dbReference>
<dbReference type="CDD" id="cd00555">
    <property type="entry name" value="Maf"/>
    <property type="match status" value="1"/>
</dbReference>
<dbReference type="Gene3D" id="3.90.950.10">
    <property type="match status" value="1"/>
</dbReference>
<dbReference type="HAMAP" id="MF_00528">
    <property type="entry name" value="Maf"/>
    <property type="match status" value="1"/>
</dbReference>
<dbReference type="InterPro" id="IPR029001">
    <property type="entry name" value="ITPase-like_fam"/>
</dbReference>
<dbReference type="InterPro" id="IPR003697">
    <property type="entry name" value="Maf-like"/>
</dbReference>
<dbReference type="NCBIfam" id="TIGR00172">
    <property type="entry name" value="maf"/>
    <property type="match status" value="1"/>
</dbReference>
<dbReference type="PANTHER" id="PTHR43213">
    <property type="entry name" value="BIFUNCTIONAL DTTP/UTP PYROPHOSPHATASE/METHYLTRANSFERASE PROTEIN-RELATED"/>
    <property type="match status" value="1"/>
</dbReference>
<dbReference type="PANTHER" id="PTHR43213:SF5">
    <property type="entry name" value="BIFUNCTIONAL DTTP_UTP PYROPHOSPHATASE_METHYLTRANSFERASE PROTEIN-RELATED"/>
    <property type="match status" value="1"/>
</dbReference>
<dbReference type="Pfam" id="PF02545">
    <property type="entry name" value="Maf"/>
    <property type="match status" value="1"/>
</dbReference>
<dbReference type="PIRSF" id="PIRSF006305">
    <property type="entry name" value="Maf"/>
    <property type="match status" value="1"/>
</dbReference>
<dbReference type="SUPFAM" id="SSF52972">
    <property type="entry name" value="ITPase-like"/>
    <property type="match status" value="1"/>
</dbReference>
<feature type="chain" id="PRO_0000267340" description="dTTP/UTP pyrophosphatase">
    <location>
        <begin position="1"/>
        <end position="199"/>
    </location>
</feature>
<feature type="active site" description="Proton acceptor" evidence="1">
    <location>
        <position position="75"/>
    </location>
</feature>
<feature type="site" description="Important for substrate specificity" evidence="1">
    <location>
        <position position="16"/>
    </location>
</feature>
<feature type="site" description="Important for substrate specificity" evidence="1">
    <location>
        <position position="76"/>
    </location>
</feature>
<feature type="site" description="Important for substrate specificity" evidence="1">
    <location>
        <position position="158"/>
    </location>
</feature>
<protein>
    <recommendedName>
        <fullName evidence="1">dTTP/UTP pyrophosphatase</fullName>
        <shortName evidence="1">dTTPase/UTPase</shortName>
        <ecNumber evidence="1">3.6.1.9</ecNumber>
    </recommendedName>
    <alternativeName>
        <fullName evidence="1">Nucleoside triphosphate pyrophosphatase</fullName>
    </alternativeName>
    <alternativeName>
        <fullName evidence="1">Nucleotide pyrophosphatase</fullName>
        <shortName evidence="1">Nucleotide PPase</shortName>
    </alternativeName>
</protein>
<proteinExistence type="inferred from homology"/>
<name>NTPPA_METFK</name>
<reference key="1">
    <citation type="submission" date="2006-03" db="EMBL/GenBank/DDBJ databases">
        <title>Complete sequence of Methylobacillus flagellatus KT.</title>
        <authorList>
            <consortium name="US DOE Joint Genome Institute"/>
            <person name="Copeland A."/>
            <person name="Lucas S."/>
            <person name="Lapidus A."/>
            <person name="Barry K."/>
            <person name="Detter J.C."/>
            <person name="Glavina del Rio T."/>
            <person name="Hammon N."/>
            <person name="Israni S."/>
            <person name="Dalin E."/>
            <person name="Tice H."/>
            <person name="Pitluck S."/>
            <person name="Brettin T."/>
            <person name="Bruce D."/>
            <person name="Han C."/>
            <person name="Tapia R."/>
            <person name="Saunders E."/>
            <person name="Gilna P."/>
            <person name="Schmutz J."/>
            <person name="Larimer F."/>
            <person name="Land M."/>
            <person name="Kyrpides N."/>
            <person name="Anderson I."/>
            <person name="Richardson P."/>
        </authorList>
    </citation>
    <scope>NUCLEOTIDE SEQUENCE [LARGE SCALE GENOMIC DNA]</scope>
    <source>
        <strain>ATCC 51484 / DSM 6875 / VKM B-1610 / KT</strain>
    </source>
</reference>
<keyword id="KW-0963">Cytoplasm</keyword>
<keyword id="KW-0378">Hydrolase</keyword>
<keyword id="KW-0546">Nucleotide metabolism</keyword>
<keyword id="KW-1185">Reference proteome</keyword>